<name>RS10_MESH7</name>
<proteinExistence type="inferred from homology"/>
<reference key="1">
    <citation type="journal article" date="2005" name="J. Bacteriol.">
        <title>Swine and poultry pathogens: the complete genome sequences of two strains of Mycoplasma hyopneumoniae and a strain of Mycoplasma synoviae.</title>
        <authorList>
            <person name="Vasconcelos A.T.R."/>
            <person name="Ferreira H.B."/>
            <person name="Bizarro C.V."/>
            <person name="Bonatto S.L."/>
            <person name="Carvalho M.O."/>
            <person name="Pinto P.M."/>
            <person name="Almeida D.F."/>
            <person name="Almeida L.G.P."/>
            <person name="Almeida R."/>
            <person name="Alves-Junior L."/>
            <person name="Assuncao E.N."/>
            <person name="Azevedo V.A.C."/>
            <person name="Bogo M.R."/>
            <person name="Brigido M.M."/>
            <person name="Brocchi M."/>
            <person name="Burity H.A."/>
            <person name="Camargo A.A."/>
            <person name="Camargo S.S."/>
            <person name="Carepo M.S."/>
            <person name="Carraro D.M."/>
            <person name="de Mattos Cascardo J.C."/>
            <person name="Castro L.A."/>
            <person name="Cavalcanti G."/>
            <person name="Chemale G."/>
            <person name="Collevatti R.G."/>
            <person name="Cunha C.W."/>
            <person name="Dallagiovanna B."/>
            <person name="Dambros B.P."/>
            <person name="Dellagostin O.A."/>
            <person name="Falcao C."/>
            <person name="Fantinatti-Garboggini F."/>
            <person name="Felipe M.S.S."/>
            <person name="Fiorentin L."/>
            <person name="Franco G.R."/>
            <person name="Freitas N.S.A."/>
            <person name="Frias D."/>
            <person name="Grangeiro T.B."/>
            <person name="Grisard E.C."/>
            <person name="Guimaraes C.T."/>
            <person name="Hungria M."/>
            <person name="Jardim S.N."/>
            <person name="Krieger M.A."/>
            <person name="Laurino J.P."/>
            <person name="Lima L.F.A."/>
            <person name="Lopes M.I."/>
            <person name="Loreto E.L.S."/>
            <person name="Madeira H.M.F."/>
            <person name="Manfio G.P."/>
            <person name="Maranhao A.Q."/>
            <person name="Martinkovics C.T."/>
            <person name="Medeiros S.R.B."/>
            <person name="Moreira M.A.M."/>
            <person name="Neiva M."/>
            <person name="Ramalho-Neto C.E."/>
            <person name="Nicolas M.F."/>
            <person name="Oliveira S.C."/>
            <person name="Paixao R.F.C."/>
            <person name="Pedrosa F.O."/>
            <person name="Pena S.D.J."/>
            <person name="Pereira M."/>
            <person name="Pereira-Ferrari L."/>
            <person name="Piffer I."/>
            <person name="Pinto L.S."/>
            <person name="Potrich D.P."/>
            <person name="Salim A.C.M."/>
            <person name="Santos F.R."/>
            <person name="Schmitt R."/>
            <person name="Schneider M.P.C."/>
            <person name="Schrank A."/>
            <person name="Schrank I.S."/>
            <person name="Schuck A.F."/>
            <person name="Seuanez H.N."/>
            <person name="Silva D.W."/>
            <person name="Silva R."/>
            <person name="Silva S.C."/>
            <person name="Soares C.M.A."/>
            <person name="Souza K.R.L."/>
            <person name="Souza R.C."/>
            <person name="Staats C.C."/>
            <person name="Steffens M.B.R."/>
            <person name="Teixeira S.M.R."/>
            <person name="Urmenyi T.P."/>
            <person name="Vainstein M.H."/>
            <person name="Zuccherato L.W."/>
            <person name="Simpson A.J.G."/>
            <person name="Zaha A."/>
        </authorList>
    </citation>
    <scope>NUCLEOTIDE SEQUENCE [LARGE SCALE GENOMIC DNA]</scope>
    <source>
        <strain>7448</strain>
    </source>
</reference>
<sequence length="106" mass="12151">MNTTSIKIKLKSFDHRQIDAAAKKIILLARELNIETRGPVPLPTSRAIYTILRSVHINKKSREQFESRTHKRLVILKVLPTNQKLVTEKISRSQLPAGVWIEIEVS</sequence>
<organism>
    <name type="scientific">Mesomycoplasma hyopneumoniae (strain 7448)</name>
    <name type="common">Mycoplasma hyopneumoniae</name>
    <dbReference type="NCBI Taxonomy" id="262722"/>
    <lineage>
        <taxon>Bacteria</taxon>
        <taxon>Bacillati</taxon>
        <taxon>Mycoplasmatota</taxon>
        <taxon>Mycoplasmoidales</taxon>
        <taxon>Metamycoplasmataceae</taxon>
        <taxon>Mesomycoplasma</taxon>
    </lineage>
</organism>
<dbReference type="EMBL" id="AE017244">
    <property type="protein sequence ID" value="AAZ53569.1"/>
    <property type="status" value="ALT_INIT"/>
    <property type="molecule type" value="Genomic_DNA"/>
</dbReference>
<dbReference type="RefSeq" id="WP_014579601.1">
    <property type="nucleotide sequence ID" value="NC_007332.1"/>
</dbReference>
<dbReference type="SMR" id="Q4A8H0"/>
<dbReference type="GeneID" id="41334494"/>
<dbReference type="KEGG" id="mhp:MHP7448_0195"/>
<dbReference type="HOGENOM" id="CLU_122625_1_3_14"/>
<dbReference type="Proteomes" id="UP000000553">
    <property type="component" value="Chromosome"/>
</dbReference>
<dbReference type="GO" id="GO:1990904">
    <property type="term" value="C:ribonucleoprotein complex"/>
    <property type="evidence" value="ECO:0007669"/>
    <property type="project" value="UniProtKB-KW"/>
</dbReference>
<dbReference type="GO" id="GO:0005840">
    <property type="term" value="C:ribosome"/>
    <property type="evidence" value="ECO:0007669"/>
    <property type="project" value="UniProtKB-KW"/>
</dbReference>
<dbReference type="GO" id="GO:0003735">
    <property type="term" value="F:structural constituent of ribosome"/>
    <property type="evidence" value="ECO:0007669"/>
    <property type="project" value="InterPro"/>
</dbReference>
<dbReference type="GO" id="GO:0000049">
    <property type="term" value="F:tRNA binding"/>
    <property type="evidence" value="ECO:0007669"/>
    <property type="project" value="UniProtKB-UniRule"/>
</dbReference>
<dbReference type="GO" id="GO:0006412">
    <property type="term" value="P:translation"/>
    <property type="evidence" value="ECO:0007669"/>
    <property type="project" value="UniProtKB-UniRule"/>
</dbReference>
<dbReference type="FunFam" id="3.30.70.600:FF:000003">
    <property type="entry name" value="30S ribosomal protein S10"/>
    <property type="match status" value="1"/>
</dbReference>
<dbReference type="Gene3D" id="3.30.70.600">
    <property type="entry name" value="Ribosomal protein S10 domain"/>
    <property type="match status" value="1"/>
</dbReference>
<dbReference type="HAMAP" id="MF_00508">
    <property type="entry name" value="Ribosomal_uS10"/>
    <property type="match status" value="1"/>
</dbReference>
<dbReference type="InterPro" id="IPR001848">
    <property type="entry name" value="Ribosomal_uS10"/>
</dbReference>
<dbReference type="InterPro" id="IPR018268">
    <property type="entry name" value="Ribosomal_uS10_CS"/>
</dbReference>
<dbReference type="InterPro" id="IPR027486">
    <property type="entry name" value="Ribosomal_uS10_dom"/>
</dbReference>
<dbReference type="InterPro" id="IPR036838">
    <property type="entry name" value="Ribosomal_uS10_dom_sf"/>
</dbReference>
<dbReference type="NCBIfam" id="NF001861">
    <property type="entry name" value="PRK00596.1"/>
    <property type="match status" value="1"/>
</dbReference>
<dbReference type="NCBIfam" id="TIGR01049">
    <property type="entry name" value="rpsJ_bact"/>
    <property type="match status" value="1"/>
</dbReference>
<dbReference type="PANTHER" id="PTHR11700">
    <property type="entry name" value="30S RIBOSOMAL PROTEIN S10 FAMILY MEMBER"/>
    <property type="match status" value="1"/>
</dbReference>
<dbReference type="Pfam" id="PF00338">
    <property type="entry name" value="Ribosomal_S10"/>
    <property type="match status" value="1"/>
</dbReference>
<dbReference type="PRINTS" id="PR00971">
    <property type="entry name" value="RIBOSOMALS10"/>
</dbReference>
<dbReference type="SMART" id="SM01403">
    <property type="entry name" value="Ribosomal_S10"/>
    <property type="match status" value="1"/>
</dbReference>
<dbReference type="SUPFAM" id="SSF54999">
    <property type="entry name" value="Ribosomal protein S10"/>
    <property type="match status" value="1"/>
</dbReference>
<dbReference type="PROSITE" id="PS00361">
    <property type="entry name" value="RIBOSOMAL_S10"/>
    <property type="match status" value="1"/>
</dbReference>
<accession>Q4A8H0</accession>
<gene>
    <name evidence="1" type="primary">rpsJ</name>
    <name type="ordered locus">MHP7448_0195</name>
</gene>
<feature type="chain" id="PRO_0000237063" description="Small ribosomal subunit protein uS10">
    <location>
        <begin position="1"/>
        <end position="106"/>
    </location>
</feature>
<keyword id="KW-0687">Ribonucleoprotein</keyword>
<keyword id="KW-0689">Ribosomal protein</keyword>
<protein>
    <recommendedName>
        <fullName evidence="1">Small ribosomal subunit protein uS10</fullName>
    </recommendedName>
    <alternativeName>
        <fullName evidence="2">30S ribosomal protein S10</fullName>
    </alternativeName>
</protein>
<comment type="function">
    <text evidence="1">Involved in the binding of tRNA to the ribosomes.</text>
</comment>
<comment type="subunit">
    <text evidence="1">Part of the 30S ribosomal subunit.</text>
</comment>
<comment type="similarity">
    <text evidence="1">Belongs to the universal ribosomal protein uS10 family.</text>
</comment>
<comment type="sequence caution" evidence="2">
    <conflict type="erroneous initiation">
        <sequence resource="EMBL-CDS" id="AAZ53569"/>
    </conflict>
</comment>
<evidence type="ECO:0000255" key="1">
    <source>
        <dbReference type="HAMAP-Rule" id="MF_00508"/>
    </source>
</evidence>
<evidence type="ECO:0000305" key="2"/>